<gene>
    <name type="primary">ycjV</name>
    <name type="synonym">ymjB</name>
    <name type="ordered locus">b4524</name>
    <name type="ordered locus">JW1311/JW5203</name>
    <name type="ORF">b1318</name>
</gene>
<keyword id="KW-0067">ATP-binding</keyword>
<keyword id="KW-0547">Nucleotide-binding</keyword>
<keyword id="KW-1185">Reference proteome</keyword>
<keyword id="KW-0813">Transport</keyword>
<sequence>MAQLSLQHIQKIYDNQVHVVKDFNLEIADKEFIVFVGPSGCGKSTTLRMIAGLEEISGGDLLIDGKRMNDVPAKARNIAMVFQNYALYPHMTVYDNMAFGLKMQKIAKEVIDERVNWAAQILGLREYLKRKPGALSGGQRQRVALGRAIVREAGVFLMDEPLSNLDAKLRVQMRAEISKLHQKLNTTMIYVTHDQTEAMTMATRIVIMKDGIVQQVGAPKTVYNQPANMFVSGFIGSPAMNFIRGTIDGDKFVTETLKLTIPEEKLAVLKTQESLHKPIVMGIRPEDIHPDAQEENNISAKISVAELTGAEFMLYTTVGGHELVVRAGALNDYHAGENITIHFDMTKCHFFDAETEIAIR</sequence>
<reference key="1">
    <citation type="journal article" date="1998" name="J. Bacteriol.">
        <title>Biochemistry and regulation of a novel Escherichia coli K-12 porin protein, OmpG, which produces unusually large channels.</title>
        <authorList>
            <person name="Fajardo D.A."/>
            <person name="Cheung J."/>
            <person name="Ito C."/>
            <person name="Sugawara E."/>
            <person name="Nikaido H."/>
            <person name="Misra R."/>
        </authorList>
    </citation>
    <scope>NUCLEOTIDE SEQUENCE [GENOMIC DNA]</scope>
    <source>
        <strain>K12</strain>
    </source>
</reference>
<reference key="2">
    <citation type="journal article" date="1996" name="DNA Res.">
        <title>A 570-kb DNA sequence of the Escherichia coli K-12 genome corresponding to the 28.0-40.1 min region on the linkage map.</title>
        <authorList>
            <person name="Aiba H."/>
            <person name="Baba T."/>
            <person name="Fujita K."/>
            <person name="Hayashi K."/>
            <person name="Inada T."/>
            <person name="Isono K."/>
            <person name="Itoh T."/>
            <person name="Kasai H."/>
            <person name="Kashimoto K."/>
            <person name="Kimura S."/>
            <person name="Kitakawa M."/>
            <person name="Kitagawa M."/>
            <person name="Makino K."/>
            <person name="Miki T."/>
            <person name="Mizobuchi K."/>
            <person name="Mori H."/>
            <person name="Mori T."/>
            <person name="Motomura K."/>
            <person name="Nakade S."/>
            <person name="Nakamura Y."/>
            <person name="Nashimoto H."/>
            <person name="Nishio Y."/>
            <person name="Oshima T."/>
            <person name="Saito N."/>
            <person name="Sampei G."/>
            <person name="Seki Y."/>
            <person name="Sivasundaram S."/>
            <person name="Tagami H."/>
            <person name="Takeda J."/>
            <person name="Takemoto K."/>
            <person name="Takeuchi Y."/>
            <person name="Wada C."/>
            <person name="Yamamoto Y."/>
            <person name="Horiuchi T."/>
        </authorList>
    </citation>
    <scope>NUCLEOTIDE SEQUENCE [LARGE SCALE GENOMIC DNA]</scope>
    <source>
        <strain>K12 / W3110 / ATCC 27325 / DSM 5911</strain>
    </source>
</reference>
<reference key="3">
    <citation type="journal article" date="1997" name="Science">
        <title>The complete genome sequence of Escherichia coli K-12.</title>
        <authorList>
            <person name="Blattner F.R."/>
            <person name="Plunkett G. III"/>
            <person name="Bloch C.A."/>
            <person name="Perna N.T."/>
            <person name="Burland V."/>
            <person name="Riley M."/>
            <person name="Collado-Vides J."/>
            <person name="Glasner J.D."/>
            <person name="Rode C.K."/>
            <person name="Mayhew G.F."/>
            <person name="Gregor J."/>
            <person name="Davis N.W."/>
            <person name="Kirkpatrick H.A."/>
            <person name="Goeden M.A."/>
            <person name="Rose D.J."/>
            <person name="Mau B."/>
            <person name="Shao Y."/>
        </authorList>
    </citation>
    <scope>NUCLEOTIDE SEQUENCE [LARGE SCALE GENOMIC DNA]</scope>
    <source>
        <strain>K12 / MG1655 / ATCC 47076</strain>
    </source>
</reference>
<reference key="4">
    <citation type="journal article" date="2006" name="Mol. Syst. Biol.">
        <title>Highly accurate genome sequences of Escherichia coli K-12 strains MG1655 and W3110.</title>
        <authorList>
            <person name="Hayashi K."/>
            <person name="Morooka N."/>
            <person name="Yamamoto Y."/>
            <person name="Fujita K."/>
            <person name="Isono K."/>
            <person name="Choi S."/>
            <person name="Ohtsubo E."/>
            <person name="Baba T."/>
            <person name="Wanner B.L."/>
            <person name="Mori H."/>
            <person name="Horiuchi T."/>
        </authorList>
    </citation>
    <scope>NUCLEOTIDE SEQUENCE [LARGE SCALE GENOMIC DNA]</scope>
    <source>
        <strain>K12 / W3110 / ATCC 27325 / DSM 5911</strain>
    </source>
</reference>
<dbReference type="EMBL" id="U49400">
    <property type="protein sequence ID" value="AAC34719.1"/>
    <property type="status" value="ALT_FRAME"/>
    <property type="molecule type" value="Genomic_DNA"/>
</dbReference>
<dbReference type="EMBL" id="U00096">
    <property type="status" value="NOT_ANNOTATED_CDS"/>
    <property type="molecule type" value="Genomic_DNA"/>
</dbReference>
<dbReference type="EMBL" id="AP009048">
    <property type="protein sequence ID" value="BAA14893.1"/>
    <property type="status" value="ALT_FRAME"/>
    <property type="molecule type" value="Genomic_DNA"/>
</dbReference>
<dbReference type="EMBL" id="AP009048">
    <property type="protein sequence ID" value="BAE76400.1"/>
    <property type="status" value="ALT_FRAME"/>
    <property type="molecule type" value="Genomic_DNA"/>
</dbReference>
<dbReference type="PIR" id="A64881">
    <property type="entry name" value="A64881"/>
</dbReference>
<dbReference type="RefSeq" id="WP_000057985.1">
    <property type="nucleotide sequence ID" value="NZ_SSZK01000012.1"/>
</dbReference>
<dbReference type="SMR" id="P77481"/>
<dbReference type="BioGRID" id="4260144">
    <property type="interactions" value="12"/>
</dbReference>
<dbReference type="BioGRID" id="4260145">
    <property type="interactions" value="9"/>
</dbReference>
<dbReference type="ComplexPortal" id="CPX-4389">
    <property type="entry name" value="YcjNOP ABC transporter complex"/>
</dbReference>
<dbReference type="DIP" id="DIP-11613N"/>
<dbReference type="FunCoup" id="P77481">
    <property type="interactions" value="307"/>
</dbReference>
<dbReference type="TCDB" id="3.A.1.1.46">
    <property type="family name" value="the atp-binding cassette (abc) superfamily"/>
</dbReference>
<dbReference type="KEGG" id="ecj:JW1311"/>
<dbReference type="KEGG" id="ecj:JW5203"/>
<dbReference type="EchoBASE" id="EB3678"/>
<dbReference type="eggNOG" id="COG3842">
    <property type="taxonomic scope" value="Bacteria"/>
</dbReference>
<dbReference type="HOGENOM" id="CLU_000604_1_1_6"/>
<dbReference type="InParanoid" id="P77481"/>
<dbReference type="PhylomeDB" id="P77481"/>
<dbReference type="Proteomes" id="UP000000625">
    <property type="component" value="Chromosome"/>
</dbReference>
<dbReference type="GO" id="GO:0055052">
    <property type="term" value="C:ATP-binding cassette (ABC) transporter complex, substrate-binding subunit-containing"/>
    <property type="evidence" value="ECO:0000318"/>
    <property type="project" value="GO_Central"/>
</dbReference>
<dbReference type="GO" id="GO:0016020">
    <property type="term" value="C:membrane"/>
    <property type="evidence" value="ECO:0000303"/>
    <property type="project" value="ComplexPortal"/>
</dbReference>
<dbReference type="GO" id="GO:0140359">
    <property type="term" value="F:ABC-type transporter activity"/>
    <property type="evidence" value="ECO:0007669"/>
    <property type="project" value="InterPro"/>
</dbReference>
<dbReference type="GO" id="GO:0005524">
    <property type="term" value="F:ATP binding"/>
    <property type="evidence" value="ECO:0007669"/>
    <property type="project" value="UniProtKB-KW"/>
</dbReference>
<dbReference type="GO" id="GO:0016887">
    <property type="term" value="F:ATP hydrolysis activity"/>
    <property type="evidence" value="ECO:0007669"/>
    <property type="project" value="InterPro"/>
</dbReference>
<dbReference type="GO" id="GO:0008643">
    <property type="term" value="P:carbohydrate transport"/>
    <property type="evidence" value="ECO:0007669"/>
    <property type="project" value="InterPro"/>
</dbReference>
<dbReference type="GO" id="GO:0055085">
    <property type="term" value="P:transmembrane transport"/>
    <property type="evidence" value="ECO:0000303"/>
    <property type="project" value="ComplexPortal"/>
</dbReference>
<dbReference type="CDD" id="cd03301">
    <property type="entry name" value="ABC_MalK_N"/>
    <property type="match status" value="1"/>
</dbReference>
<dbReference type="FunFam" id="3.40.50.300:FF:000042">
    <property type="entry name" value="Maltose/maltodextrin ABC transporter, ATP-binding protein"/>
    <property type="match status" value="1"/>
</dbReference>
<dbReference type="Gene3D" id="2.40.50.100">
    <property type="match status" value="1"/>
</dbReference>
<dbReference type="Gene3D" id="2.40.50.140">
    <property type="entry name" value="Nucleic acid-binding proteins"/>
    <property type="match status" value="1"/>
</dbReference>
<dbReference type="Gene3D" id="3.40.50.300">
    <property type="entry name" value="P-loop containing nucleotide triphosphate hydrolases"/>
    <property type="match status" value="1"/>
</dbReference>
<dbReference type="InterPro" id="IPR003593">
    <property type="entry name" value="AAA+_ATPase"/>
</dbReference>
<dbReference type="InterPro" id="IPR003439">
    <property type="entry name" value="ABC_transporter-like_ATP-bd"/>
</dbReference>
<dbReference type="InterPro" id="IPR017871">
    <property type="entry name" value="ABC_transporter-like_CS"/>
</dbReference>
<dbReference type="InterPro" id="IPR015855">
    <property type="entry name" value="ABC_transpr_MalK-like"/>
</dbReference>
<dbReference type="InterPro" id="IPR047641">
    <property type="entry name" value="ABC_transpr_MalK/UgpC-like"/>
</dbReference>
<dbReference type="InterPro" id="IPR008995">
    <property type="entry name" value="Mo/tungstate-bd_C_term_dom"/>
</dbReference>
<dbReference type="InterPro" id="IPR012340">
    <property type="entry name" value="NA-bd_OB-fold"/>
</dbReference>
<dbReference type="InterPro" id="IPR040582">
    <property type="entry name" value="OB_MalK-like"/>
</dbReference>
<dbReference type="InterPro" id="IPR027417">
    <property type="entry name" value="P-loop_NTPase"/>
</dbReference>
<dbReference type="InterPro" id="IPR005116">
    <property type="entry name" value="Transp-assoc_OB_typ1"/>
</dbReference>
<dbReference type="NCBIfam" id="NF008653">
    <property type="entry name" value="PRK11650.1"/>
    <property type="match status" value="1"/>
</dbReference>
<dbReference type="PANTHER" id="PTHR43875">
    <property type="entry name" value="MALTODEXTRIN IMPORT ATP-BINDING PROTEIN MSMX"/>
    <property type="match status" value="1"/>
</dbReference>
<dbReference type="PANTHER" id="PTHR43875:SF1">
    <property type="entry name" value="OSMOPROTECTIVE COMPOUNDS UPTAKE ATP-BINDING PROTEIN GGTA"/>
    <property type="match status" value="1"/>
</dbReference>
<dbReference type="Pfam" id="PF00005">
    <property type="entry name" value="ABC_tran"/>
    <property type="match status" value="1"/>
</dbReference>
<dbReference type="Pfam" id="PF17912">
    <property type="entry name" value="OB_MalK"/>
    <property type="match status" value="1"/>
</dbReference>
<dbReference type="Pfam" id="PF03459">
    <property type="entry name" value="TOBE"/>
    <property type="match status" value="1"/>
</dbReference>
<dbReference type="SMART" id="SM00382">
    <property type="entry name" value="AAA"/>
    <property type="match status" value="1"/>
</dbReference>
<dbReference type="SUPFAM" id="SSF50331">
    <property type="entry name" value="MOP-like"/>
    <property type="match status" value="1"/>
</dbReference>
<dbReference type="SUPFAM" id="SSF52540">
    <property type="entry name" value="P-loop containing nucleoside triphosphate hydrolases"/>
    <property type="match status" value="1"/>
</dbReference>
<dbReference type="PROSITE" id="PS00211">
    <property type="entry name" value="ABC_TRANSPORTER_1"/>
    <property type="match status" value="1"/>
</dbReference>
<dbReference type="PROSITE" id="PS50893">
    <property type="entry name" value="ABC_TRANSPORTER_2"/>
    <property type="match status" value="1"/>
</dbReference>
<accession>P77481</accession>
<accession>P76842</accession>
<accession>Q2EER6</accession>
<accession>Q2MBF6</accession>
<evidence type="ECO:0000255" key="1">
    <source>
        <dbReference type="PROSITE-ProRule" id="PRU00434"/>
    </source>
</evidence>
<evidence type="ECO:0000305" key="2"/>
<proteinExistence type="uncertain"/>
<organism>
    <name type="scientific">Escherichia coli (strain K12)</name>
    <dbReference type="NCBI Taxonomy" id="83333"/>
    <lineage>
        <taxon>Bacteria</taxon>
        <taxon>Pseudomonadati</taxon>
        <taxon>Pseudomonadota</taxon>
        <taxon>Gammaproteobacteria</taxon>
        <taxon>Enterobacterales</taxon>
        <taxon>Enterobacteriaceae</taxon>
        <taxon>Escherichia</taxon>
    </lineage>
</organism>
<feature type="chain" id="PRO_0000093161" description="Putative uncharacterized ABC transporter ATP-binding protein YcjV">
    <location>
        <begin position="1"/>
        <end position="360"/>
    </location>
</feature>
<feature type="domain" description="ABC transporter" evidence="1">
    <location>
        <begin position="4"/>
        <end position="235"/>
    </location>
</feature>
<feature type="binding site" evidence="1">
    <location>
        <begin position="37"/>
        <end position="44"/>
    </location>
    <ligand>
        <name>ATP</name>
        <dbReference type="ChEBI" id="CHEBI:30616"/>
    </ligand>
</feature>
<feature type="sequence conflict" description="In Ref. 1; AAC34719." evidence="2" ref="1">
    <original>GP</original>
    <variation>AA</variation>
    <location>
        <begin position="37"/>
        <end position="38"/>
    </location>
</feature>
<comment type="similarity">
    <text evidence="2">Belongs to the ABC transporter superfamily.</text>
</comment>
<comment type="caution">
    <text evidence="2">Could be the product of a pseudogene.</text>
</comment>
<comment type="sequence caution" evidence="2">
    <conflict type="frameshift">
        <sequence resource="EMBL-CDS" id="AAC34719"/>
    </conflict>
</comment>
<comment type="sequence caution" evidence="2">
    <conflict type="frameshift">
        <sequence resource="EMBL-CDS" id="BAA14893"/>
    </conflict>
</comment>
<comment type="sequence caution" evidence="2">
    <conflict type="frameshift">
        <sequence resource="EMBL-CDS" id="BAE76400"/>
    </conflict>
</comment>
<comment type="sequence caution" evidence="2">
    <conflict type="frameshift">
        <sequence resource="EMBL" id="U00096"/>
    </conflict>
</comment>
<name>YCJV_ECOLI</name>
<protein>
    <recommendedName>
        <fullName>Putative uncharacterized ABC transporter ATP-binding protein YcjV</fullName>
    </recommendedName>
</protein>